<dbReference type="EMBL" id="AC165361">
    <property type="status" value="NOT_ANNOTATED_CDS"/>
    <property type="molecule type" value="Genomic_DNA"/>
</dbReference>
<dbReference type="EMBL" id="AK016052">
    <property type="status" value="NOT_ANNOTATED_CDS"/>
    <property type="molecule type" value="mRNA"/>
</dbReference>
<dbReference type="EMBL" id="BC171982">
    <property type="protein sequence ID" value="AAI71982.1"/>
    <property type="molecule type" value="mRNA"/>
</dbReference>
<dbReference type="EMBL" id="BC171984">
    <property type="protein sequence ID" value="AAI71984.1"/>
    <property type="molecule type" value="mRNA"/>
</dbReference>
<dbReference type="CCDS" id="CCDS49967.1">
    <molecule id="E9Q8Q8-1"/>
</dbReference>
<dbReference type="RefSeq" id="NP_001156381.1">
    <molecule id="E9Q8Q8-1"/>
    <property type="nucleotide sequence ID" value="NM_001162909.1"/>
</dbReference>
<dbReference type="SMR" id="E9Q8Q8"/>
<dbReference type="FunCoup" id="E9Q8Q8">
    <property type="interactions" value="52"/>
</dbReference>
<dbReference type="STRING" id="10090.ENSMUSP00000128732"/>
<dbReference type="GlyCosmos" id="E9Q8Q8">
    <property type="glycosylation" value="1 site, No reported glycans"/>
</dbReference>
<dbReference type="GlyGen" id="E9Q8Q8">
    <property type="glycosylation" value="1 site"/>
</dbReference>
<dbReference type="PhosphoSitePlus" id="E9Q8Q8"/>
<dbReference type="PaxDb" id="10090-ENSMUSP00000128732"/>
<dbReference type="DNASU" id="75202"/>
<dbReference type="Ensembl" id="ENSMUST00000172097.9">
    <molecule id="E9Q8Q8-1"/>
    <property type="protein sequence ID" value="ENSMUSP00000128732.3"/>
    <property type="gene ID" value="ENSMUSG00000080316.12"/>
</dbReference>
<dbReference type="GeneID" id="75202"/>
<dbReference type="KEGG" id="mmu:75202"/>
<dbReference type="UCSC" id="uc012ald.1">
    <molecule id="E9Q8Q8-1"/>
    <property type="organism name" value="mouse"/>
</dbReference>
<dbReference type="UCSC" id="uc012ale.1">
    <property type="organism name" value="mouse"/>
</dbReference>
<dbReference type="AGR" id="MGI:1922452"/>
<dbReference type="CTD" id="147650"/>
<dbReference type="MGI" id="MGI:1922452">
    <property type="gene designation" value="Spaca6"/>
</dbReference>
<dbReference type="VEuPathDB" id="HostDB:ENSMUSG00000080316"/>
<dbReference type="eggNOG" id="ENOG502S923">
    <property type="taxonomic scope" value="Eukaryota"/>
</dbReference>
<dbReference type="GeneTree" id="ENSGT00390000009010"/>
<dbReference type="HOGENOM" id="CLU_075835_0_0_1"/>
<dbReference type="InParanoid" id="E9Q8Q8"/>
<dbReference type="OMA" id="TQDQSYF"/>
<dbReference type="OrthoDB" id="8960581at2759"/>
<dbReference type="TreeFam" id="TF342447"/>
<dbReference type="BioGRID-ORCS" id="75202">
    <property type="hits" value="2 hits in 78 CRISPR screens"/>
</dbReference>
<dbReference type="ChiTaRS" id="Spaca6">
    <property type="organism name" value="mouse"/>
</dbReference>
<dbReference type="PRO" id="PR:E9Q8Q8"/>
<dbReference type="Proteomes" id="UP000000589">
    <property type="component" value="Chromosome 17"/>
</dbReference>
<dbReference type="RNAct" id="E9Q8Q8">
    <property type="molecule type" value="protein"/>
</dbReference>
<dbReference type="Bgee" id="ENSMUSG00000080316">
    <property type="expression patterns" value="Expressed in spermatid and 88 other cell types or tissues"/>
</dbReference>
<dbReference type="ExpressionAtlas" id="E9Q8Q8">
    <property type="expression patterns" value="baseline and differential"/>
</dbReference>
<dbReference type="GO" id="GO:0002080">
    <property type="term" value="C:acrosomal membrane"/>
    <property type="evidence" value="ECO:0007669"/>
    <property type="project" value="UniProtKB-SubCell"/>
</dbReference>
<dbReference type="GO" id="GO:0001669">
    <property type="term" value="C:acrosomal vesicle"/>
    <property type="evidence" value="ECO:0000314"/>
    <property type="project" value="UniProtKB"/>
</dbReference>
<dbReference type="GO" id="GO:0016020">
    <property type="term" value="C:membrane"/>
    <property type="evidence" value="ECO:0000255"/>
    <property type="project" value="MGI"/>
</dbReference>
<dbReference type="GO" id="GO:0005886">
    <property type="term" value="C:plasma membrane"/>
    <property type="evidence" value="ECO:0007669"/>
    <property type="project" value="Ensembl"/>
</dbReference>
<dbReference type="GO" id="GO:0030674">
    <property type="term" value="F:protein-macromolecule adaptor activity"/>
    <property type="evidence" value="ECO:0007669"/>
    <property type="project" value="Ensembl"/>
</dbReference>
<dbReference type="GO" id="GO:0007342">
    <property type="term" value="P:fusion of sperm to egg plasma membrane involved in single fertilization"/>
    <property type="evidence" value="ECO:0000315"/>
    <property type="project" value="UniProtKB"/>
</dbReference>
<dbReference type="GO" id="GO:0035036">
    <property type="term" value="P:sperm-egg recognition"/>
    <property type="evidence" value="ECO:0007669"/>
    <property type="project" value="Ensembl"/>
</dbReference>
<dbReference type="InterPro" id="IPR007110">
    <property type="entry name" value="Ig-like_dom"/>
</dbReference>
<dbReference type="InterPro" id="IPR036179">
    <property type="entry name" value="Ig-like_dom_sf"/>
</dbReference>
<dbReference type="InterPro" id="IPR034549">
    <property type="entry name" value="SPACA6"/>
</dbReference>
<dbReference type="PANTHER" id="PTHR37366">
    <property type="entry name" value="SPERM ACROSOME MEMBRANE-ASSOCIATED PROTEIN 6"/>
    <property type="match status" value="1"/>
</dbReference>
<dbReference type="PANTHER" id="PTHR37366:SF1">
    <property type="entry name" value="SPERM ACROSOME MEMBRANE-ASSOCIATED PROTEIN 6"/>
    <property type="match status" value="1"/>
</dbReference>
<dbReference type="SUPFAM" id="SSF48726">
    <property type="entry name" value="Immunoglobulin"/>
    <property type="match status" value="1"/>
</dbReference>
<dbReference type="PROSITE" id="PS50835">
    <property type="entry name" value="IG_LIKE"/>
    <property type="match status" value="1"/>
</dbReference>
<protein>
    <recommendedName>
        <fullName evidence="8">Sperm acrosome membrane-associated protein 6</fullName>
    </recommendedName>
</protein>
<evidence type="ECO:0000250" key="1">
    <source>
        <dbReference type="UniProtKB" id="A0A8M9PDM1"/>
    </source>
</evidence>
<evidence type="ECO:0000250" key="2">
    <source>
        <dbReference type="UniProtKB" id="W5XKT8"/>
    </source>
</evidence>
<evidence type="ECO:0000255" key="3"/>
<evidence type="ECO:0000255" key="4">
    <source>
        <dbReference type="PROSITE-ProRule" id="PRU00114"/>
    </source>
</evidence>
<evidence type="ECO:0000269" key="5">
    <source>
    </source>
</evidence>
<evidence type="ECO:0000269" key="6">
    <source>
    </source>
</evidence>
<evidence type="ECO:0000269" key="7">
    <source>
    </source>
</evidence>
<evidence type="ECO:0000303" key="8">
    <source>
    </source>
</evidence>
<evidence type="ECO:0000305" key="9"/>
<comment type="function">
    <text evidence="1 5 6 7">Sperm protein required for fusion of sperm with the egg membrane during fertilization (PubMed:24275887, PubMed:32210282, PubMed:32393636). May regulate the expression of sperm surface protein DCST2 (By similarity).</text>
</comment>
<comment type="subunit">
    <text evidence="2">Forms a complex with IZUMO1 and TMEM81 on spermatocyte cell membrane required for fertilization.</text>
</comment>
<comment type="subcellular location">
    <subcellularLocation>
        <location evidence="7">Cytoplasmic vesicle</location>
        <location evidence="7">Secretory vesicle</location>
        <location evidence="7">Acrosome membrane</location>
        <topology evidence="3">Single-pass type I membrane protein</topology>
    </subcellularLocation>
</comment>
<comment type="alternative products">
    <event type="alternative splicing"/>
    <isoform>
        <id>E9Q8Q8-1</id>
        <name>1</name>
        <sequence type="displayed"/>
    </isoform>
    <isoform>
        <id>E9Q8Q8-2</id>
        <name>2</name>
        <sequence type="described" ref="VSP_057873 VSP_057874"/>
    </isoform>
    <isoform>
        <id>E9Q8Q8-3</id>
        <name>3</name>
        <sequence type="described" ref="VSP_057872 VSP_057875 VSP_057876"/>
    </isoform>
</comment>
<comment type="tissue specificity">
    <text evidence="5 7">Highly expressed in testis (PubMed:24275887, PubMed:32393636). Minor expression also detected in epididymis, seminal vesicle and ovary (PubMed:32393636). Predominantly expressed in testicular germ cells during spermiogenesis (PubMed:24275887). Most abundant in round spermatids and detected at lower levels in elongating spermatids (PubMed:24275887).</text>
</comment>
<comment type="developmental stage">
    <text evidence="7">Expression is first detected on postnatal day 21.</text>
</comment>
<comment type="domain">
    <text evidence="2">The extracellular domain shows strong structural similarity with IZUMO1 but does not interact with the IZUMO1 receptor IZUMO1R/JUNO.</text>
</comment>
<comment type="disruption phenotype">
    <text evidence="5 7">Male infertility (PubMed:24275887, PubMed:32393636). Testis appearance, size and weight are normal and there is no effect on sperm morphology or motility but there is a failure of sperm-egg interaction and fusion (PubMed:24275887, PubMed:32393636). Spermatozoa undergo normal acrosomal reaction and can penetrate the zona pellucida but accumulate in the perivitelline space as they are unable to fuse with the egg plasma membrane to complete fertilization (PubMed:24275887, PubMed:32393636). No effect on amount or localization of sperm-egg fusion protein IZUMO1 (PubMed:32393636).</text>
</comment>
<comment type="similarity">
    <text evidence="9">Belongs to the SPACA6 family.</text>
</comment>
<keyword id="KW-0025">Alternative splicing</keyword>
<keyword id="KW-0968">Cytoplasmic vesicle</keyword>
<keyword id="KW-1015">Disulfide bond</keyword>
<keyword id="KW-0278">Fertilization</keyword>
<keyword id="KW-0325">Glycoprotein</keyword>
<keyword id="KW-0393">Immunoglobulin domain</keyword>
<keyword id="KW-0472">Membrane</keyword>
<keyword id="KW-1185">Reference proteome</keyword>
<keyword id="KW-0732">Signal</keyword>
<keyword id="KW-0812">Transmembrane</keyword>
<keyword id="KW-1133">Transmembrane helix</keyword>
<organism>
    <name type="scientific">Mus musculus</name>
    <name type="common">Mouse</name>
    <dbReference type="NCBI Taxonomy" id="10090"/>
    <lineage>
        <taxon>Eukaryota</taxon>
        <taxon>Metazoa</taxon>
        <taxon>Chordata</taxon>
        <taxon>Craniata</taxon>
        <taxon>Vertebrata</taxon>
        <taxon>Euteleostomi</taxon>
        <taxon>Mammalia</taxon>
        <taxon>Eutheria</taxon>
        <taxon>Euarchontoglires</taxon>
        <taxon>Glires</taxon>
        <taxon>Rodentia</taxon>
        <taxon>Myomorpha</taxon>
        <taxon>Muroidea</taxon>
        <taxon>Muridae</taxon>
        <taxon>Murinae</taxon>
        <taxon>Mus</taxon>
        <taxon>Mus</taxon>
    </lineage>
</organism>
<gene>
    <name evidence="8" type="primary">Spaca6</name>
</gene>
<reference key="1">
    <citation type="journal article" date="2009" name="PLoS Biol.">
        <title>Lineage-specific biology revealed by a finished genome assembly of the mouse.</title>
        <authorList>
            <person name="Church D.M."/>
            <person name="Goodstadt L."/>
            <person name="Hillier L.W."/>
            <person name="Zody M.C."/>
            <person name="Goldstein S."/>
            <person name="She X."/>
            <person name="Bult C.J."/>
            <person name="Agarwala R."/>
            <person name="Cherry J.L."/>
            <person name="DiCuccio M."/>
            <person name="Hlavina W."/>
            <person name="Kapustin Y."/>
            <person name="Meric P."/>
            <person name="Maglott D."/>
            <person name="Birtle Z."/>
            <person name="Marques A.C."/>
            <person name="Graves T."/>
            <person name="Zhou S."/>
            <person name="Teague B."/>
            <person name="Potamousis K."/>
            <person name="Churas C."/>
            <person name="Place M."/>
            <person name="Herschleb J."/>
            <person name="Runnheim R."/>
            <person name="Forrest D."/>
            <person name="Amos-Landgraf J."/>
            <person name="Schwartz D.C."/>
            <person name="Cheng Z."/>
            <person name="Lindblad-Toh K."/>
            <person name="Eichler E.E."/>
            <person name="Ponting C.P."/>
        </authorList>
    </citation>
    <scope>NUCLEOTIDE SEQUENCE [LARGE SCALE GENOMIC DNA]</scope>
    <source>
        <strain>C57BL/6J</strain>
    </source>
</reference>
<reference key="2">
    <citation type="journal article" date="2004" name="Genome Res.">
        <title>The status, quality, and expansion of the NIH full-length cDNA project: the Mammalian Gene Collection (MGC).</title>
        <authorList>
            <consortium name="The MGC Project Team"/>
        </authorList>
    </citation>
    <scope>NUCLEOTIDE SEQUENCE [LARGE SCALE MRNA] (ISOFORM 3)</scope>
    <source>
        <tissue>Brain</tissue>
    </source>
</reference>
<reference key="3">
    <citation type="journal article" date="2005" name="Science">
        <title>The transcriptional landscape of the mammalian genome.</title>
        <authorList>
            <person name="Carninci P."/>
            <person name="Kasukawa T."/>
            <person name="Katayama S."/>
            <person name="Gough J."/>
            <person name="Frith M.C."/>
            <person name="Maeda N."/>
            <person name="Oyama R."/>
            <person name="Ravasi T."/>
            <person name="Lenhard B."/>
            <person name="Wells C."/>
            <person name="Kodzius R."/>
            <person name="Shimokawa K."/>
            <person name="Bajic V.B."/>
            <person name="Brenner S.E."/>
            <person name="Batalov S."/>
            <person name="Forrest A.R."/>
            <person name="Zavolan M."/>
            <person name="Davis M.J."/>
            <person name="Wilming L.G."/>
            <person name="Aidinis V."/>
            <person name="Allen J.E."/>
            <person name="Ambesi-Impiombato A."/>
            <person name="Apweiler R."/>
            <person name="Aturaliya R.N."/>
            <person name="Bailey T.L."/>
            <person name="Bansal M."/>
            <person name="Baxter L."/>
            <person name="Beisel K.W."/>
            <person name="Bersano T."/>
            <person name="Bono H."/>
            <person name="Chalk A.M."/>
            <person name="Chiu K.P."/>
            <person name="Choudhary V."/>
            <person name="Christoffels A."/>
            <person name="Clutterbuck D.R."/>
            <person name="Crowe M.L."/>
            <person name="Dalla E."/>
            <person name="Dalrymple B.P."/>
            <person name="de Bono B."/>
            <person name="Della Gatta G."/>
            <person name="di Bernardo D."/>
            <person name="Down T."/>
            <person name="Engstrom P."/>
            <person name="Fagiolini M."/>
            <person name="Faulkner G."/>
            <person name="Fletcher C.F."/>
            <person name="Fukushima T."/>
            <person name="Furuno M."/>
            <person name="Futaki S."/>
            <person name="Gariboldi M."/>
            <person name="Georgii-Hemming P."/>
            <person name="Gingeras T.R."/>
            <person name="Gojobori T."/>
            <person name="Green R.E."/>
            <person name="Gustincich S."/>
            <person name="Harbers M."/>
            <person name="Hayashi Y."/>
            <person name="Hensch T.K."/>
            <person name="Hirokawa N."/>
            <person name="Hill D."/>
            <person name="Huminiecki L."/>
            <person name="Iacono M."/>
            <person name="Ikeo K."/>
            <person name="Iwama A."/>
            <person name="Ishikawa T."/>
            <person name="Jakt M."/>
            <person name="Kanapin A."/>
            <person name="Katoh M."/>
            <person name="Kawasawa Y."/>
            <person name="Kelso J."/>
            <person name="Kitamura H."/>
            <person name="Kitano H."/>
            <person name="Kollias G."/>
            <person name="Krishnan S.P."/>
            <person name="Kruger A."/>
            <person name="Kummerfeld S.K."/>
            <person name="Kurochkin I.V."/>
            <person name="Lareau L.F."/>
            <person name="Lazarevic D."/>
            <person name="Lipovich L."/>
            <person name="Liu J."/>
            <person name="Liuni S."/>
            <person name="McWilliam S."/>
            <person name="Madan Babu M."/>
            <person name="Madera M."/>
            <person name="Marchionni L."/>
            <person name="Matsuda H."/>
            <person name="Matsuzawa S."/>
            <person name="Miki H."/>
            <person name="Mignone F."/>
            <person name="Miyake S."/>
            <person name="Morris K."/>
            <person name="Mottagui-Tabar S."/>
            <person name="Mulder N."/>
            <person name="Nakano N."/>
            <person name="Nakauchi H."/>
            <person name="Ng P."/>
            <person name="Nilsson R."/>
            <person name="Nishiguchi S."/>
            <person name="Nishikawa S."/>
            <person name="Nori F."/>
            <person name="Ohara O."/>
            <person name="Okazaki Y."/>
            <person name="Orlando V."/>
            <person name="Pang K.C."/>
            <person name="Pavan W.J."/>
            <person name="Pavesi G."/>
            <person name="Pesole G."/>
            <person name="Petrovsky N."/>
            <person name="Piazza S."/>
            <person name="Reed J."/>
            <person name="Reid J.F."/>
            <person name="Ring B.Z."/>
            <person name="Ringwald M."/>
            <person name="Rost B."/>
            <person name="Ruan Y."/>
            <person name="Salzberg S.L."/>
            <person name="Sandelin A."/>
            <person name="Schneider C."/>
            <person name="Schoenbach C."/>
            <person name="Sekiguchi K."/>
            <person name="Semple C.A."/>
            <person name="Seno S."/>
            <person name="Sessa L."/>
            <person name="Sheng Y."/>
            <person name="Shibata Y."/>
            <person name="Shimada H."/>
            <person name="Shimada K."/>
            <person name="Silva D."/>
            <person name="Sinclair B."/>
            <person name="Sperling S."/>
            <person name="Stupka E."/>
            <person name="Sugiura K."/>
            <person name="Sultana R."/>
            <person name="Takenaka Y."/>
            <person name="Taki K."/>
            <person name="Tammoja K."/>
            <person name="Tan S.L."/>
            <person name="Tang S."/>
            <person name="Taylor M.S."/>
            <person name="Tegner J."/>
            <person name="Teichmann S.A."/>
            <person name="Ueda H.R."/>
            <person name="van Nimwegen E."/>
            <person name="Verardo R."/>
            <person name="Wei C.L."/>
            <person name="Yagi K."/>
            <person name="Yamanishi H."/>
            <person name="Zabarovsky E."/>
            <person name="Zhu S."/>
            <person name="Zimmer A."/>
            <person name="Hide W."/>
            <person name="Bult C."/>
            <person name="Grimmond S.M."/>
            <person name="Teasdale R.D."/>
            <person name="Liu E.T."/>
            <person name="Brusic V."/>
            <person name="Quackenbush J."/>
            <person name="Wahlestedt C."/>
            <person name="Mattick J.S."/>
            <person name="Hume D.A."/>
            <person name="Kai C."/>
            <person name="Sasaki D."/>
            <person name="Tomaru Y."/>
            <person name="Fukuda S."/>
            <person name="Kanamori-Katayama M."/>
            <person name="Suzuki M."/>
            <person name="Aoki J."/>
            <person name="Arakawa T."/>
            <person name="Iida J."/>
            <person name="Imamura K."/>
            <person name="Itoh M."/>
            <person name="Kato T."/>
            <person name="Kawaji H."/>
            <person name="Kawagashira N."/>
            <person name="Kawashima T."/>
            <person name="Kojima M."/>
            <person name="Kondo S."/>
            <person name="Konno H."/>
            <person name="Nakano K."/>
            <person name="Ninomiya N."/>
            <person name="Nishio T."/>
            <person name="Okada M."/>
            <person name="Plessy C."/>
            <person name="Shibata K."/>
            <person name="Shiraki T."/>
            <person name="Suzuki S."/>
            <person name="Tagami M."/>
            <person name="Waki K."/>
            <person name="Watahiki A."/>
            <person name="Okamura-Oho Y."/>
            <person name="Suzuki H."/>
            <person name="Kawai J."/>
            <person name="Hayashizaki Y."/>
        </authorList>
    </citation>
    <scope>NUCLEOTIDE SEQUENCE [LARGE SCALE MRNA] OF 21-339 (ISOFORM 2)</scope>
    <source>
        <tissue>Testis</tissue>
    </source>
</reference>
<reference key="4">
    <citation type="journal article" date="2014" name="Mamm. Genome">
        <title>A transgenic insertion on mouse chromosome 17 inactivates a novel immunoglobulin superfamily gene potentially involved in sperm-egg fusion.</title>
        <authorList>
            <person name="Lorenzetti D."/>
            <person name="Poirier C."/>
            <person name="Zhao M."/>
            <person name="Overbeek P.A."/>
            <person name="Harrison W."/>
            <person name="Bishop C.E."/>
        </authorList>
    </citation>
    <scope>FUNCTION</scope>
    <scope>DISRUPTION PHENOTYPE</scope>
    <scope>TISSUE SPECIFICITY</scope>
    <scope>ALTERNATIVE SPLICING</scope>
</reference>
<reference key="5">
    <citation type="journal article" date="2020" name="Proc. Natl. Acad. Sci. U.S.A.">
        <title>Sperm proteins SOF1, TMEM95, and SPACA6 are required for sperm-oocyte fusion in mice.</title>
        <authorList>
            <person name="Noda T."/>
            <person name="Lu Y."/>
            <person name="Fujihara Y."/>
            <person name="Oura S."/>
            <person name="Koyano T."/>
            <person name="Kobayashi S."/>
            <person name="Matzuk M.M."/>
            <person name="Ikawa M."/>
        </authorList>
    </citation>
    <scope>FUNCTION</scope>
    <scope>SUBCELLULAR LOCATION</scope>
    <scope>TISSUE SPECIFICITY</scope>
    <scope>DEVELOPMENTAL STAGE</scope>
    <scope>DISRUPTION PHENOTYPE</scope>
</reference>
<reference key="6">
    <citation type="journal article" date="2020" name="Sci. Rep.">
        <title>Sperm SPACA6 protein is required for mammalian Sperm-Egg Adhesion/Fusion.</title>
        <authorList>
            <person name="Barbaux S."/>
            <person name="Ialy-Radio C."/>
            <person name="Chalbi M."/>
            <person name="Dybal E."/>
            <person name="Homps-Legrand M."/>
            <person name="Do Cruzeiro M."/>
            <person name="Vaiman D."/>
            <person name="Wolf J.P."/>
            <person name="Ziyyat A."/>
        </authorList>
    </citation>
    <scope>FUNCTION</scope>
</reference>
<feature type="signal peptide" evidence="3 9">
    <location>
        <begin position="1"/>
        <end position="41"/>
    </location>
</feature>
<feature type="chain" id="PRO_0000434004" description="Sperm acrosome membrane-associated protein 6" evidence="3">
    <location>
        <begin position="42"/>
        <end position="339"/>
    </location>
</feature>
<feature type="topological domain" description="Extracellular" evidence="9">
    <location>
        <begin position="42"/>
        <end position="310"/>
    </location>
</feature>
<feature type="transmembrane region" description="Helical" evidence="3 9">
    <location>
        <begin position="311"/>
        <end position="331"/>
    </location>
</feature>
<feature type="topological domain" description="Cytoplasmic" evidence="9">
    <location>
        <begin position="332"/>
        <end position="339"/>
    </location>
</feature>
<feature type="domain" description="Ig-like" evidence="4">
    <location>
        <begin position="166"/>
        <end position="251"/>
    </location>
</feature>
<feature type="short sequence motif" description="CXXC motif" evidence="2">
    <location>
        <begin position="42"/>
        <end position="45"/>
    </location>
</feature>
<feature type="short sequence motif" description="CXXC motif" evidence="2">
    <location>
        <begin position="155"/>
        <end position="158"/>
    </location>
</feature>
<feature type="glycosylation site" description="N-linked (GlcNAc...) asparagine" evidence="3 9">
    <location>
        <position position="258"/>
    </location>
</feature>
<feature type="disulfide bond" evidence="2">
    <location>
        <begin position="42"/>
        <end position="155"/>
    </location>
</feature>
<feature type="disulfide bond" evidence="2">
    <location>
        <begin position="45"/>
        <end position="158"/>
    </location>
</feature>
<feature type="disulfide bond" evidence="2">
    <location>
        <begin position="56"/>
        <end position="70"/>
    </location>
</feature>
<feature type="disulfide bond" evidence="2">
    <location>
        <begin position="140"/>
        <end position="163"/>
    </location>
</feature>
<feature type="disulfide bond" evidence="2">
    <location>
        <begin position="144"/>
        <end position="169"/>
    </location>
</feature>
<feature type="disulfide bond" evidence="2">
    <location>
        <begin position="186"/>
        <end position="241"/>
    </location>
</feature>
<feature type="splice variant" id="VSP_057872" description="In isoform 3.">
    <location>
        <begin position="1"/>
        <end position="217"/>
    </location>
</feature>
<feature type="splice variant" id="VSP_057873" description="In isoform 2.">
    <original>VR</original>
    <variation>PN</variation>
    <location>
        <begin position="207"/>
        <end position="208"/>
    </location>
</feature>
<feature type="splice variant" id="VSP_057874" description="In isoform 2.">
    <location>
        <begin position="209"/>
        <end position="339"/>
    </location>
</feature>
<feature type="splice variant" id="VSP_057875" description="In isoform 3.">
    <original>VTGPPPP</original>
    <variation>GTGGVRI</variation>
    <location>
        <begin position="259"/>
        <end position="265"/>
    </location>
</feature>
<feature type="splice variant" id="VSP_057876" description="In isoform 3.">
    <location>
        <begin position="266"/>
        <end position="339"/>
    </location>
</feature>
<sequence length="339" mass="38503">MTSQRSLSSPQTRRPSVMGLISLVGSIVLLFLLIFRASTWACLFCFTTYEERLRVCQLFVGREETKINLCRNELEGAFEDLKDMKINYDERSYLHDEFTQMTVSLQEKAARRREPFWLAFKDAAAKLKRTIEHLKKAPACIPPCGLQEVARLFHCSGCFSKLCDLPLDCPVQDMLVNRGDQALFSCIVAFELPESEITYSWKFVGGVRTKDVTYFRDMPGAHGYLARIRPVQPKHGGTFSCVILHDQRPLARLYFYLNVTGPPPPEDTELQVTFREVMNRTPAEPEMIQPWSPSLGELLTNPQALTLGNLFLLAATAALGSASVTLLVWLFFRWYLSGN</sequence>
<accession>E9Q8Q8</accession>
<accession>B7ZWC7</accession>
<accession>D3Z1S3</accession>
<accession>J3QMI7</accession>
<name>SACA6_MOUSE</name>
<proteinExistence type="evidence at transcript level"/>